<sequence>MSAVFDASAFLATCSNRPGVYRMFDAEAKLLYVGKAKSLKKRLASYFRKSGLAPKTAALVARIAQVETTITANETEALLLEQTLIKEWRPPYNILLRDDKSYPFVFLSSEDEYPRLSLHRGAKKRKGRYFGPYPSAGAIRESLNLLQKAFLVRQCEDSYFRNRTRPCLQYQIKRCKGPCVGLVSPEEYAEDVRHSVMFLEGRSNALADELNVGMEQAAMRLDFEKAAELRDQVAILRRVQDQQSMEGGNGDVDIVAAIVTPGGACVHLISVRGGRVLGSKNFFPQVAIEEEVGEVLLAFLGQYYLSHQERDLPAELIVNVTHEDFPVLVSAIAEARGRELEISYRVRGTRARWQQLAVTNAEQALGARLANRQHVAARFEALAEALDLAEPPQRLECFDISHSSGEATVASCVVFGPEGPLKSDYRRYNIEGVTAGDDYAAMHQALTRRFSRLKDGEGKMPDILLVDGGKGQLAMAQEVLQELAVAGLILLGVAKGVTRKPGLETLYLNDASHEFTLPADSPALHLIQQIRDEAHRFAITGHRARRGKARRTSTLEDVPGVGPKRRRDLLKHFGGLQELSRASIDELAKAPGISKKLAEQIYAVLHSE</sequence>
<dbReference type="EMBL" id="AE004091">
    <property type="protein sequence ID" value="AAG05973.1"/>
    <property type="molecule type" value="Genomic_DNA"/>
</dbReference>
<dbReference type="PIR" id="C83322">
    <property type="entry name" value="C83322"/>
</dbReference>
<dbReference type="RefSeq" id="NP_251275.1">
    <property type="nucleotide sequence ID" value="NC_002516.2"/>
</dbReference>
<dbReference type="RefSeq" id="WP_003113354.1">
    <property type="nucleotide sequence ID" value="NZ_QZGE01000008.1"/>
</dbReference>
<dbReference type="SMR" id="Q9I0Q1"/>
<dbReference type="FunCoup" id="Q9I0Q1">
    <property type="interactions" value="277"/>
</dbReference>
<dbReference type="STRING" id="208964.PA2585"/>
<dbReference type="PaxDb" id="208964-PA2585"/>
<dbReference type="GeneID" id="880581"/>
<dbReference type="KEGG" id="pae:PA2585"/>
<dbReference type="PATRIC" id="fig|208964.12.peg.2705"/>
<dbReference type="PseudoCAP" id="PA2585"/>
<dbReference type="HOGENOM" id="CLU_014841_3_0_6"/>
<dbReference type="InParanoid" id="Q9I0Q1"/>
<dbReference type="OrthoDB" id="9804933at2"/>
<dbReference type="PhylomeDB" id="Q9I0Q1"/>
<dbReference type="BioCyc" id="PAER208964:G1FZ6-2624-MONOMER"/>
<dbReference type="Proteomes" id="UP000002438">
    <property type="component" value="Chromosome"/>
</dbReference>
<dbReference type="GO" id="GO:0005737">
    <property type="term" value="C:cytoplasm"/>
    <property type="evidence" value="ECO:0007669"/>
    <property type="project" value="UniProtKB-SubCell"/>
</dbReference>
<dbReference type="GO" id="GO:0009380">
    <property type="term" value="C:excinuclease repair complex"/>
    <property type="evidence" value="ECO:0000318"/>
    <property type="project" value="GO_Central"/>
</dbReference>
<dbReference type="GO" id="GO:0003677">
    <property type="term" value="F:DNA binding"/>
    <property type="evidence" value="ECO:0007669"/>
    <property type="project" value="UniProtKB-UniRule"/>
</dbReference>
<dbReference type="GO" id="GO:0009381">
    <property type="term" value="F:excinuclease ABC activity"/>
    <property type="evidence" value="ECO:0007669"/>
    <property type="project" value="UniProtKB-UniRule"/>
</dbReference>
<dbReference type="GO" id="GO:0006974">
    <property type="term" value="P:DNA damage response"/>
    <property type="evidence" value="ECO:0000318"/>
    <property type="project" value="GO_Central"/>
</dbReference>
<dbReference type="GO" id="GO:0006289">
    <property type="term" value="P:nucleotide-excision repair"/>
    <property type="evidence" value="ECO:0007669"/>
    <property type="project" value="UniProtKB-UniRule"/>
</dbReference>
<dbReference type="GO" id="GO:0009432">
    <property type="term" value="P:SOS response"/>
    <property type="evidence" value="ECO:0007669"/>
    <property type="project" value="UniProtKB-UniRule"/>
</dbReference>
<dbReference type="CDD" id="cd10434">
    <property type="entry name" value="GIY-YIG_UvrC_Cho"/>
    <property type="match status" value="1"/>
</dbReference>
<dbReference type="FunFam" id="1.10.150.20:FF:000005">
    <property type="entry name" value="UvrABC system protein C"/>
    <property type="match status" value="1"/>
</dbReference>
<dbReference type="FunFam" id="3.30.420.340:FF:000001">
    <property type="entry name" value="UvrABC system protein C"/>
    <property type="match status" value="1"/>
</dbReference>
<dbReference type="FunFam" id="3.40.1440.10:FF:000001">
    <property type="entry name" value="UvrABC system protein C"/>
    <property type="match status" value="1"/>
</dbReference>
<dbReference type="Gene3D" id="1.10.150.20">
    <property type="entry name" value="5' to 3' exonuclease, C-terminal subdomain"/>
    <property type="match status" value="1"/>
</dbReference>
<dbReference type="Gene3D" id="3.40.1440.10">
    <property type="entry name" value="GIY-YIG endonuclease"/>
    <property type="match status" value="1"/>
</dbReference>
<dbReference type="Gene3D" id="4.10.860.10">
    <property type="entry name" value="UVR domain"/>
    <property type="match status" value="1"/>
</dbReference>
<dbReference type="Gene3D" id="3.30.420.340">
    <property type="entry name" value="UvrC, RNAse H endonuclease domain"/>
    <property type="match status" value="1"/>
</dbReference>
<dbReference type="HAMAP" id="MF_00203">
    <property type="entry name" value="UvrC"/>
    <property type="match status" value="1"/>
</dbReference>
<dbReference type="InterPro" id="IPR000305">
    <property type="entry name" value="GIY-YIG_endonuc"/>
</dbReference>
<dbReference type="InterPro" id="IPR035901">
    <property type="entry name" value="GIY-YIG_endonuc_sf"/>
</dbReference>
<dbReference type="InterPro" id="IPR047296">
    <property type="entry name" value="GIY-YIG_UvrC_Cho"/>
</dbReference>
<dbReference type="InterPro" id="IPR003583">
    <property type="entry name" value="Hlx-hairpin-Hlx_DNA-bd_motif"/>
</dbReference>
<dbReference type="InterPro" id="IPR010994">
    <property type="entry name" value="RuvA_2-like"/>
</dbReference>
<dbReference type="InterPro" id="IPR001943">
    <property type="entry name" value="UVR_dom"/>
</dbReference>
<dbReference type="InterPro" id="IPR036876">
    <property type="entry name" value="UVR_dom_sf"/>
</dbReference>
<dbReference type="InterPro" id="IPR050066">
    <property type="entry name" value="UvrABC_protein_C"/>
</dbReference>
<dbReference type="InterPro" id="IPR004791">
    <property type="entry name" value="UvrC"/>
</dbReference>
<dbReference type="InterPro" id="IPR001162">
    <property type="entry name" value="UvrC_RNase_H_dom"/>
</dbReference>
<dbReference type="InterPro" id="IPR038476">
    <property type="entry name" value="UvrC_RNase_H_dom_sf"/>
</dbReference>
<dbReference type="NCBIfam" id="NF001824">
    <property type="entry name" value="PRK00558.1-5"/>
    <property type="match status" value="1"/>
</dbReference>
<dbReference type="NCBIfam" id="TIGR00194">
    <property type="entry name" value="uvrC"/>
    <property type="match status" value="1"/>
</dbReference>
<dbReference type="PANTHER" id="PTHR30562:SF1">
    <property type="entry name" value="UVRABC SYSTEM PROTEIN C"/>
    <property type="match status" value="1"/>
</dbReference>
<dbReference type="PANTHER" id="PTHR30562">
    <property type="entry name" value="UVRC/OXIDOREDUCTASE"/>
    <property type="match status" value="1"/>
</dbReference>
<dbReference type="Pfam" id="PF01541">
    <property type="entry name" value="GIY-YIG"/>
    <property type="match status" value="1"/>
</dbReference>
<dbReference type="Pfam" id="PF14520">
    <property type="entry name" value="HHH_5"/>
    <property type="match status" value="1"/>
</dbReference>
<dbReference type="Pfam" id="PF02151">
    <property type="entry name" value="UVR"/>
    <property type="match status" value="1"/>
</dbReference>
<dbReference type="Pfam" id="PF22920">
    <property type="entry name" value="UvrC_RNaseH"/>
    <property type="match status" value="1"/>
</dbReference>
<dbReference type="Pfam" id="PF08459">
    <property type="entry name" value="UvrC_RNaseH_dom"/>
    <property type="match status" value="1"/>
</dbReference>
<dbReference type="SMART" id="SM00465">
    <property type="entry name" value="GIYc"/>
    <property type="match status" value="1"/>
</dbReference>
<dbReference type="SMART" id="SM00278">
    <property type="entry name" value="HhH1"/>
    <property type="match status" value="2"/>
</dbReference>
<dbReference type="SUPFAM" id="SSF46600">
    <property type="entry name" value="C-terminal UvrC-binding domain of UvrB"/>
    <property type="match status" value="1"/>
</dbReference>
<dbReference type="SUPFAM" id="SSF82771">
    <property type="entry name" value="GIY-YIG endonuclease"/>
    <property type="match status" value="1"/>
</dbReference>
<dbReference type="SUPFAM" id="SSF47781">
    <property type="entry name" value="RuvA domain 2-like"/>
    <property type="match status" value="1"/>
</dbReference>
<dbReference type="PROSITE" id="PS50164">
    <property type="entry name" value="GIY_YIG"/>
    <property type="match status" value="1"/>
</dbReference>
<dbReference type="PROSITE" id="PS50151">
    <property type="entry name" value="UVR"/>
    <property type="match status" value="1"/>
</dbReference>
<dbReference type="PROSITE" id="PS50165">
    <property type="entry name" value="UVRC"/>
    <property type="match status" value="1"/>
</dbReference>
<proteinExistence type="inferred from homology"/>
<gene>
    <name evidence="1" type="primary">uvrC</name>
    <name type="ordered locus">PA2585</name>
</gene>
<protein>
    <recommendedName>
        <fullName evidence="1">UvrABC system protein C</fullName>
        <shortName evidence="1">Protein UvrC</shortName>
    </recommendedName>
    <alternativeName>
        <fullName evidence="1">Excinuclease ABC subunit C</fullName>
    </alternativeName>
</protein>
<accession>Q9I0Q1</accession>
<evidence type="ECO:0000255" key="1">
    <source>
        <dbReference type="HAMAP-Rule" id="MF_00203"/>
    </source>
</evidence>
<name>UVRC_PSEAE</name>
<reference key="1">
    <citation type="journal article" date="2000" name="Nature">
        <title>Complete genome sequence of Pseudomonas aeruginosa PAO1, an opportunistic pathogen.</title>
        <authorList>
            <person name="Stover C.K."/>
            <person name="Pham X.-Q.T."/>
            <person name="Erwin A.L."/>
            <person name="Mizoguchi S.D."/>
            <person name="Warrener P."/>
            <person name="Hickey M.J."/>
            <person name="Brinkman F.S.L."/>
            <person name="Hufnagle W.O."/>
            <person name="Kowalik D.J."/>
            <person name="Lagrou M."/>
            <person name="Garber R.L."/>
            <person name="Goltry L."/>
            <person name="Tolentino E."/>
            <person name="Westbrock-Wadman S."/>
            <person name="Yuan Y."/>
            <person name="Brody L.L."/>
            <person name="Coulter S.N."/>
            <person name="Folger K.R."/>
            <person name="Kas A."/>
            <person name="Larbig K."/>
            <person name="Lim R.M."/>
            <person name="Smith K.A."/>
            <person name="Spencer D.H."/>
            <person name="Wong G.K.-S."/>
            <person name="Wu Z."/>
            <person name="Paulsen I.T."/>
            <person name="Reizer J."/>
            <person name="Saier M.H. Jr."/>
            <person name="Hancock R.E.W."/>
            <person name="Lory S."/>
            <person name="Olson M.V."/>
        </authorList>
    </citation>
    <scope>NUCLEOTIDE SEQUENCE [LARGE SCALE GENOMIC DNA]</scope>
    <source>
        <strain>ATCC 15692 / DSM 22644 / CIP 104116 / JCM 14847 / LMG 12228 / 1C / PRS 101 / PAO1</strain>
    </source>
</reference>
<keyword id="KW-0963">Cytoplasm</keyword>
<keyword id="KW-0227">DNA damage</keyword>
<keyword id="KW-0228">DNA excision</keyword>
<keyword id="KW-0234">DNA repair</keyword>
<keyword id="KW-0267">Excision nuclease</keyword>
<keyword id="KW-1185">Reference proteome</keyword>
<keyword id="KW-0742">SOS response</keyword>
<organism>
    <name type="scientific">Pseudomonas aeruginosa (strain ATCC 15692 / DSM 22644 / CIP 104116 / JCM 14847 / LMG 12228 / 1C / PRS 101 / PAO1)</name>
    <dbReference type="NCBI Taxonomy" id="208964"/>
    <lineage>
        <taxon>Bacteria</taxon>
        <taxon>Pseudomonadati</taxon>
        <taxon>Pseudomonadota</taxon>
        <taxon>Gammaproteobacteria</taxon>
        <taxon>Pseudomonadales</taxon>
        <taxon>Pseudomonadaceae</taxon>
        <taxon>Pseudomonas</taxon>
    </lineage>
</organism>
<feature type="chain" id="PRO_0000138326" description="UvrABC system protein C">
    <location>
        <begin position="1"/>
        <end position="608"/>
    </location>
</feature>
<feature type="domain" description="GIY-YIG" evidence="1">
    <location>
        <begin position="16"/>
        <end position="94"/>
    </location>
</feature>
<feature type="domain" description="UVR" evidence="1">
    <location>
        <begin position="204"/>
        <end position="239"/>
    </location>
</feature>
<comment type="function">
    <text evidence="1">The UvrABC repair system catalyzes the recognition and processing of DNA lesions. UvrC both incises the 5' and 3' sides of the lesion. The N-terminal half is responsible for the 3' incision and the C-terminal half is responsible for the 5' incision.</text>
</comment>
<comment type="subunit">
    <text evidence="1">Interacts with UvrB in an incision complex.</text>
</comment>
<comment type="subcellular location">
    <subcellularLocation>
        <location evidence="1">Cytoplasm</location>
    </subcellularLocation>
</comment>
<comment type="similarity">
    <text evidence="1">Belongs to the UvrC family.</text>
</comment>